<proteinExistence type="evidence at transcript level"/>
<name>HES2_HUMAN</name>
<reference key="1">
    <citation type="journal article" date="2004" name="Nat. Genet.">
        <title>Complete sequencing and characterization of 21,243 full-length human cDNAs.</title>
        <authorList>
            <person name="Ota T."/>
            <person name="Suzuki Y."/>
            <person name="Nishikawa T."/>
            <person name="Otsuki T."/>
            <person name="Sugiyama T."/>
            <person name="Irie R."/>
            <person name="Wakamatsu A."/>
            <person name="Hayashi K."/>
            <person name="Sato H."/>
            <person name="Nagai K."/>
            <person name="Kimura K."/>
            <person name="Makita H."/>
            <person name="Sekine M."/>
            <person name="Obayashi M."/>
            <person name="Nishi T."/>
            <person name="Shibahara T."/>
            <person name="Tanaka T."/>
            <person name="Ishii S."/>
            <person name="Yamamoto J."/>
            <person name="Saito K."/>
            <person name="Kawai Y."/>
            <person name="Isono Y."/>
            <person name="Nakamura Y."/>
            <person name="Nagahari K."/>
            <person name="Murakami K."/>
            <person name="Yasuda T."/>
            <person name="Iwayanagi T."/>
            <person name="Wagatsuma M."/>
            <person name="Shiratori A."/>
            <person name="Sudo H."/>
            <person name="Hosoiri T."/>
            <person name="Kaku Y."/>
            <person name="Kodaira H."/>
            <person name="Kondo H."/>
            <person name="Sugawara M."/>
            <person name="Takahashi M."/>
            <person name="Kanda K."/>
            <person name="Yokoi T."/>
            <person name="Furuya T."/>
            <person name="Kikkawa E."/>
            <person name="Omura Y."/>
            <person name="Abe K."/>
            <person name="Kamihara K."/>
            <person name="Katsuta N."/>
            <person name="Sato K."/>
            <person name="Tanikawa M."/>
            <person name="Yamazaki M."/>
            <person name="Ninomiya K."/>
            <person name="Ishibashi T."/>
            <person name="Yamashita H."/>
            <person name="Murakawa K."/>
            <person name="Fujimori K."/>
            <person name="Tanai H."/>
            <person name="Kimata M."/>
            <person name="Watanabe M."/>
            <person name="Hiraoka S."/>
            <person name="Chiba Y."/>
            <person name="Ishida S."/>
            <person name="Ono Y."/>
            <person name="Takiguchi S."/>
            <person name="Watanabe S."/>
            <person name="Yosida M."/>
            <person name="Hotuta T."/>
            <person name="Kusano J."/>
            <person name="Kanehori K."/>
            <person name="Takahashi-Fujii A."/>
            <person name="Hara H."/>
            <person name="Tanase T.-O."/>
            <person name="Nomura Y."/>
            <person name="Togiya S."/>
            <person name="Komai F."/>
            <person name="Hara R."/>
            <person name="Takeuchi K."/>
            <person name="Arita M."/>
            <person name="Imose N."/>
            <person name="Musashino K."/>
            <person name="Yuuki H."/>
            <person name="Oshima A."/>
            <person name="Sasaki N."/>
            <person name="Aotsuka S."/>
            <person name="Yoshikawa Y."/>
            <person name="Matsunawa H."/>
            <person name="Ichihara T."/>
            <person name="Shiohata N."/>
            <person name="Sano S."/>
            <person name="Moriya S."/>
            <person name="Momiyama H."/>
            <person name="Satoh N."/>
            <person name="Takami S."/>
            <person name="Terashima Y."/>
            <person name="Suzuki O."/>
            <person name="Nakagawa S."/>
            <person name="Senoh A."/>
            <person name="Mizoguchi H."/>
            <person name="Goto Y."/>
            <person name="Shimizu F."/>
            <person name="Wakebe H."/>
            <person name="Hishigaki H."/>
            <person name="Watanabe T."/>
            <person name="Sugiyama A."/>
            <person name="Takemoto M."/>
            <person name="Kawakami B."/>
            <person name="Yamazaki M."/>
            <person name="Watanabe K."/>
            <person name="Kumagai A."/>
            <person name="Itakura S."/>
            <person name="Fukuzumi Y."/>
            <person name="Fujimori Y."/>
            <person name="Komiyama M."/>
            <person name="Tashiro H."/>
            <person name="Tanigami A."/>
            <person name="Fujiwara T."/>
            <person name="Ono T."/>
            <person name="Yamada K."/>
            <person name="Fujii Y."/>
            <person name="Ozaki K."/>
            <person name="Hirao M."/>
            <person name="Ohmori Y."/>
            <person name="Kawabata A."/>
            <person name="Hikiji T."/>
            <person name="Kobatake N."/>
            <person name="Inagaki H."/>
            <person name="Ikema Y."/>
            <person name="Okamoto S."/>
            <person name="Okitani R."/>
            <person name="Kawakami T."/>
            <person name="Noguchi S."/>
            <person name="Itoh T."/>
            <person name="Shigeta K."/>
            <person name="Senba T."/>
            <person name="Matsumura K."/>
            <person name="Nakajima Y."/>
            <person name="Mizuno T."/>
            <person name="Morinaga M."/>
            <person name="Sasaki M."/>
            <person name="Togashi T."/>
            <person name="Oyama M."/>
            <person name="Hata H."/>
            <person name="Watanabe M."/>
            <person name="Komatsu T."/>
            <person name="Mizushima-Sugano J."/>
            <person name="Satoh T."/>
            <person name="Shirai Y."/>
            <person name="Takahashi Y."/>
            <person name="Nakagawa K."/>
            <person name="Okumura K."/>
            <person name="Nagase T."/>
            <person name="Nomura N."/>
            <person name="Kikuchi H."/>
            <person name="Masuho Y."/>
            <person name="Yamashita R."/>
            <person name="Nakai K."/>
            <person name="Yada T."/>
            <person name="Nakamura Y."/>
            <person name="Ohara O."/>
            <person name="Isogai T."/>
            <person name="Sugano S."/>
        </authorList>
    </citation>
    <scope>NUCLEOTIDE SEQUENCE [LARGE SCALE MRNA] (ISOFORM 1)</scope>
    <source>
        <tissue>Tongue</tissue>
    </source>
</reference>
<reference key="2">
    <citation type="submission" date="2005-07" db="EMBL/GenBank/DDBJ databases">
        <authorList>
            <person name="Mural R.J."/>
            <person name="Istrail S."/>
            <person name="Sutton G."/>
            <person name="Florea L."/>
            <person name="Halpern A.L."/>
            <person name="Mobarry C.M."/>
            <person name="Lippert R."/>
            <person name="Walenz B."/>
            <person name="Shatkay H."/>
            <person name="Dew I."/>
            <person name="Miller J.R."/>
            <person name="Flanigan M.J."/>
            <person name="Edwards N.J."/>
            <person name="Bolanos R."/>
            <person name="Fasulo D."/>
            <person name="Halldorsson B.V."/>
            <person name="Hannenhalli S."/>
            <person name="Turner R."/>
            <person name="Yooseph S."/>
            <person name="Lu F."/>
            <person name="Nusskern D.R."/>
            <person name="Shue B.C."/>
            <person name="Zheng X.H."/>
            <person name="Zhong F."/>
            <person name="Delcher A.L."/>
            <person name="Huson D.H."/>
            <person name="Kravitz S.A."/>
            <person name="Mouchard L."/>
            <person name="Reinert K."/>
            <person name="Remington K.A."/>
            <person name="Clark A.G."/>
            <person name="Waterman M.S."/>
            <person name="Eichler E.E."/>
            <person name="Adams M.D."/>
            <person name="Hunkapiller M.W."/>
            <person name="Myers E.W."/>
            <person name="Venter J.C."/>
        </authorList>
    </citation>
    <scope>NUCLEOTIDE SEQUENCE [LARGE SCALE GENOMIC DNA]</scope>
</reference>
<reference key="3">
    <citation type="journal article" date="2006" name="Nature">
        <title>The DNA sequence and biological annotation of human chromosome 1.</title>
        <authorList>
            <person name="Gregory S.G."/>
            <person name="Barlow K.F."/>
            <person name="McLay K.E."/>
            <person name="Kaul R."/>
            <person name="Swarbreck D."/>
            <person name="Dunham A."/>
            <person name="Scott C.E."/>
            <person name="Howe K.L."/>
            <person name="Woodfine K."/>
            <person name="Spencer C.C.A."/>
            <person name="Jones M.C."/>
            <person name="Gillson C."/>
            <person name="Searle S."/>
            <person name="Zhou Y."/>
            <person name="Kokocinski F."/>
            <person name="McDonald L."/>
            <person name="Evans R."/>
            <person name="Phillips K."/>
            <person name="Atkinson A."/>
            <person name="Cooper R."/>
            <person name="Jones C."/>
            <person name="Hall R.E."/>
            <person name="Andrews T.D."/>
            <person name="Lloyd C."/>
            <person name="Ainscough R."/>
            <person name="Almeida J.P."/>
            <person name="Ambrose K.D."/>
            <person name="Anderson F."/>
            <person name="Andrew R.W."/>
            <person name="Ashwell R.I.S."/>
            <person name="Aubin K."/>
            <person name="Babbage A.K."/>
            <person name="Bagguley C.L."/>
            <person name="Bailey J."/>
            <person name="Beasley H."/>
            <person name="Bethel G."/>
            <person name="Bird C.P."/>
            <person name="Bray-Allen S."/>
            <person name="Brown J.Y."/>
            <person name="Brown A.J."/>
            <person name="Buckley D."/>
            <person name="Burton J."/>
            <person name="Bye J."/>
            <person name="Carder C."/>
            <person name="Chapman J.C."/>
            <person name="Clark S.Y."/>
            <person name="Clarke G."/>
            <person name="Clee C."/>
            <person name="Cobley V."/>
            <person name="Collier R.E."/>
            <person name="Corby N."/>
            <person name="Coville G.J."/>
            <person name="Davies J."/>
            <person name="Deadman R."/>
            <person name="Dunn M."/>
            <person name="Earthrowl M."/>
            <person name="Ellington A.G."/>
            <person name="Errington H."/>
            <person name="Frankish A."/>
            <person name="Frankland J."/>
            <person name="French L."/>
            <person name="Garner P."/>
            <person name="Garnett J."/>
            <person name="Gay L."/>
            <person name="Ghori M.R.J."/>
            <person name="Gibson R."/>
            <person name="Gilby L.M."/>
            <person name="Gillett W."/>
            <person name="Glithero R.J."/>
            <person name="Grafham D.V."/>
            <person name="Griffiths C."/>
            <person name="Griffiths-Jones S."/>
            <person name="Grocock R."/>
            <person name="Hammond S."/>
            <person name="Harrison E.S.I."/>
            <person name="Hart E."/>
            <person name="Haugen E."/>
            <person name="Heath P.D."/>
            <person name="Holmes S."/>
            <person name="Holt K."/>
            <person name="Howden P.J."/>
            <person name="Hunt A.R."/>
            <person name="Hunt S.E."/>
            <person name="Hunter G."/>
            <person name="Isherwood J."/>
            <person name="James R."/>
            <person name="Johnson C."/>
            <person name="Johnson D."/>
            <person name="Joy A."/>
            <person name="Kay M."/>
            <person name="Kershaw J.K."/>
            <person name="Kibukawa M."/>
            <person name="Kimberley A.M."/>
            <person name="King A."/>
            <person name="Knights A.J."/>
            <person name="Lad H."/>
            <person name="Laird G."/>
            <person name="Lawlor S."/>
            <person name="Leongamornlert D.A."/>
            <person name="Lloyd D.M."/>
            <person name="Loveland J."/>
            <person name="Lovell J."/>
            <person name="Lush M.J."/>
            <person name="Lyne R."/>
            <person name="Martin S."/>
            <person name="Mashreghi-Mohammadi M."/>
            <person name="Matthews L."/>
            <person name="Matthews N.S.W."/>
            <person name="McLaren S."/>
            <person name="Milne S."/>
            <person name="Mistry S."/>
            <person name="Moore M.J.F."/>
            <person name="Nickerson T."/>
            <person name="O'Dell C.N."/>
            <person name="Oliver K."/>
            <person name="Palmeiri A."/>
            <person name="Palmer S.A."/>
            <person name="Parker A."/>
            <person name="Patel D."/>
            <person name="Pearce A.V."/>
            <person name="Peck A.I."/>
            <person name="Pelan S."/>
            <person name="Phelps K."/>
            <person name="Phillimore B.J."/>
            <person name="Plumb R."/>
            <person name="Rajan J."/>
            <person name="Raymond C."/>
            <person name="Rouse G."/>
            <person name="Saenphimmachak C."/>
            <person name="Sehra H.K."/>
            <person name="Sheridan E."/>
            <person name="Shownkeen R."/>
            <person name="Sims S."/>
            <person name="Skuce C.D."/>
            <person name="Smith M."/>
            <person name="Steward C."/>
            <person name="Subramanian S."/>
            <person name="Sycamore N."/>
            <person name="Tracey A."/>
            <person name="Tromans A."/>
            <person name="Van Helmond Z."/>
            <person name="Wall M."/>
            <person name="Wallis J.M."/>
            <person name="White S."/>
            <person name="Whitehead S.L."/>
            <person name="Wilkinson J.E."/>
            <person name="Willey D.L."/>
            <person name="Williams H."/>
            <person name="Wilming L."/>
            <person name="Wray P.W."/>
            <person name="Wu Z."/>
            <person name="Coulson A."/>
            <person name="Vaudin M."/>
            <person name="Sulston J.E."/>
            <person name="Durbin R.M."/>
            <person name="Hubbard T."/>
            <person name="Wooster R."/>
            <person name="Dunham I."/>
            <person name="Carter N.P."/>
            <person name="McVean G."/>
            <person name="Ross M.T."/>
            <person name="Harrow J."/>
            <person name="Olson M.V."/>
            <person name="Beck S."/>
            <person name="Rogers J."/>
            <person name="Bentley D.R."/>
        </authorList>
    </citation>
    <scope>NUCLEOTIDE SEQUENCE [LARGE SCALE GENOMIC DNA]</scope>
</reference>
<reference key="4">
    <citation type="journal article" date="2004" name="Genome Res.">
        <title>The status, quality, and expansion of the NIH full-length cDNA project: the Mammalian Gene Collection (MGC).</title>
        <authorList>
            <consortium name="The MGC Project Team"/>
        </authorList>
    </citation>
    <scope>NUCLEOTIDE SEQUENCE [LARGE SCALE MRNA] (ISOFORMS 1 AND 2)</scope>
    <source>
        <tissue>Eye</tissue>
    </source>
</reference>
<reference key="5">
    <citation type="journal article" date="2004" name="Int. J. Oncol.">
        <title>Identification and characterization of human HES2, HES3, and HES5 genes in silico.</title>
        <authorList>
            <person name="Katoh M."/>
            <person name="Katoh M."/>
        </authorList>
    </citation>
    <scope>IDENTIFICATION</scope>
    <scope>TISSUE SPECIFICITY</scope>
</reference>
<gene>
    <name type="primary">HES2</name>
    <name type="synonym">BHLHB40</name>
</gene>
<protein>
    <recommendedName>
        <fullName>Transcription factor HES-2</fullName>
    </recommendedName>
    <alternativeName>
        <fullName>Class B basic helix-loop-helix protein 40</fullName>
        <shortName>bHLHb40</shortName>
    </alternativeName>
    <alternativeName>
        <fullName>Hairy and enhancer of split 2</fullName>
    </alternativeName>
</protein>
<comment type="function">
    <text evidence="1">Transcriptional repressor of genes that require a bHLH protein for their transcription.</text>
</comment>
<comment type="subunit">
    <text evidence="1">Transcription repression requires formation of a complex with a corepressor protein of the Groucho/TLE family.</text>
</comment>
<comment type="subcellular location">
    <subcellularLocation>
        <location evidence="2 3">Nucleus</location>
    </subcellularLocation>
</comment>
<comment type="alternative products">
    <event type="alternative splicing"/>
    <isoform>
        <id>Q9Y543-1</id>
        <name>1</name>
        <sequence type="displayed"/>
    </isoform>
    <isoform>
        <id>Q9Y543-2</id>
        <name>2</name>
        <sequence type="described" ref="VSP_002104"/>
    </isoform>
</comment>
<comment type="tissue specificity">
    <text evidence="5">Expressed in placenta, pancreatic cancer, colon cancer with RER, cervical cancer, and in head and neck tumors.</text>
</comment>
<comment type="domain">
    <text>Has a particular type of basic domain (presence of a helix-interrupting proline) that binds to the N-box (CACNAG), rather than the canonical E-box (CANNTG).</text>
</comment>
<comment type="domain">
    <text evidence="1">The C-terminal WRPW motif is a transcriptional repression domain necessary for the interaction with Groucho/TLE family members, transcriptional corepressors recruited to specific target DNA by Hairy-related proteins.</text>
</comment>
<feature type="chain" id="PRO_0000127206" description="Transcription factor HES-2">
    <location>
        <begin position="1"/>
        <end position="173"/>
    </location>
</feature>
<feature type="domain" description="bHLH" evidence="3">
    <location>
        <begin position="13"/>
        <end position="70"/>
    </location>
</feature>
<feature type="domain" description="Orange" evidence="2">
    <location>
        <begin position="86"/>
        <end position="119"/>
    </location>
</feature>
<feature type="region of interest" description="Disordered" evidence="4">
    <location>
        <begin position="128"/>
        <end position="173"/>
    </location>
</feature>
<feature type="short sequence motif" description="WRPW motif">
    <location>
        <begin position="170"/>
        <end position="173"/>
    </location>
</feature>
<feature type="compositionally biased region" description="Pro residues" evidence="4">
    <location>
        <begin position="141"/>
        <end position="166"/>
    </location>
</feature>
<feature type="splice variant" id="VSP_002104" description="In isoform 2." evidence="6">
    <original>NSNCSKLEKADVLEMTVRFLQELPASSWPTAAPLPCDSYREGYSACVARLARVLPACRVLEPAVSARLLEHLWRRAASATLDGGRAGDSSGPSAPAPAPASAPEPASAPVPSPPSPPCGPGLWRPW</original>
    <variation>DASGWHTWLPLHAQNCFLLYIQAPEQPPA</variation>
    <location>
        <begin position="48"/>
        <end position="173"/>
    </location>
</feature>
<feature type="sequence variant" id="VAR_061256" description="In dbSNP:rs2235687.">
    <original>P</original>
    <variation>S</variation>
    <location>
        <position position="139"/>
    </location>
</feature>
<organism>
    <name type="scientific">Homo sapiens</name>
    <name type="common">Human</name>
    <dbReference type="NCBI Taxonomy" id="9606"/>
    <lineage>
        <taxon>Eukaryota</taxon>
        <taxon>Metazoa</taxon>
        <taxon>Chordata</taxon>
        <taxon>Craniata</taxon>
        <taxon>Vertebrata</taxon>
        <taxon>Euteleostomi</taxon>
        <taxon>Mammalia</taxon>
        <taxon>Eutheria</taxon>
        <taxon>Euarchontoglires</taxon>
        <taxon>Primates</taxon>
        <taxon>Haplorrhini</taxon>
        <taxon>Catarrhini</taxon>
        <taxon>Hominidae</taxon>
        <taxon>Homo</taxon>
    </lineage>
</organism>
<evidence type="ECO:0000250" key="1"/>
<evidence type="ECO:0000255" key="2">
    <source>
        <dbReference type="PROSITE-ProRule" id="PRU00380"/>
    </source>
</evidence>
<evidence type="ECO:0000255" key="3">
    <source>
        <dbReference type="PROSITE-ProRule" id="PRU00981"/>
    </source>
</evidence>
<evidence type="ECO:0000256" key="4">
    <source>
        <dbReference type="SAM" id="MobiDB-lite"/>
    </source>
</evidence>
<evidence type="ECO:0000269" key="5">
    <source>
    </source>
</evidence>
<evidence type="ECO:0000303" key="6">
    <source>
    </source>
</evidence>
<sequence>MGLPRRAGDAAELRKSLKPLLEKRRRARINQSLSQLKGLILPLLGRENSNCSKLEKADVLEMTVRFLQELPASSWPTAAPLPCDSYREGYSACVARLARVLPACRVLEPAVSARLLEHLWRRAASATLDGGRAGDSSGPSAPAPAPASAPEPASAPVPSPPSPPCGPGLWRPW</sequence>
<dbReference type="EMBL" id="AK091122">
    <property type="protein sequence ID" value="BAG52286.1"/>
    <property type="molecule type" value="mRNA"/>
</dbReference>
<dbReference type="EMBL" id="AL031848">
    <property type="status" value="NOT_ANNOTATED_CDS"/>
    <property type="molecule type" value="Genomic_DNA"/>
</dbReference>
<dbReference type="EMBL" id="CH471130">
    <property type="protein sequence ID" value="EAW71533.1"/>
    <property type="molecule type" value="Genomic_DNA"/>
</dbReference>
<dbReference type="EMBL" id="BC012091">
    <property type="protein sequence ID" value="AAH12091.1"/>
    <property type="molecule type" value="mRNA"/>
</dbReference>
<dbReference type="EMBL" id="BC132698">
    <property type="protein sequence ID" value="AAI32699.1"/>
    <property type="molecule type" value="mRNA"/>
</dbReference>
<dbReference type="EMBL" id="BC136963">
    <property type="protein sequence ID" value="AAI36964.1"/>
    <property type="molecule type" value="mRNA"/>
</dbReference>
<dbReference type="EMBL" id="BC142687">
    <property type="protein sequence ID" value="AAI42688.1"/>
    <property type="molecule type" value="mRNA"/>
</dbReference>
<dbReference type="CCDS" id="CCDS30574.1">
    <molecule id="Q9Y543-1"/>
</dbReference>
<dbReference type="RefSeq" id="NP_061962.2">
    <molecule id="Q9Y543-1"/>
    <property type="nucleotide sequence ID" value="NM_019089.4"/>
</dbReference>
<dbReference type="SMR" id="Q9Y543"/>
<dbReference type="BioGRID" id="120083">
    <property type="interactions" value="8"/>
</dbReference>
<dbReference type="ELM" id="Q9Y543"/>
<dbReference type="FunCoup" id="Q9Y543">
    <property type="interactions" value="1014"/>
</dbReference>
<dbReference type="PhosphoSitePlus" id="Q9Y543"/>
<dbReference type="BioMuta" id="HES2"/>
<dbReference type="DMDM" id="12643954"/>
<dbReference type="jPOST" id="Q9Y543"/>
<dbReference type="MassIVE" id="Q9Y543"/>
<dbReference type="PaxDb" id="9606-ENSP00000367065"/>
<dbReference type="PeptideAtlas" id="Q9Y543"/>
<dbReference type="ProteomicsDB" id="86285">
    <molecule id="Q9Y543-1"/>
</dbReference>
<dbReference type="ProteomicsDB" id="86286">
    <molecule id="Q9Y543-2"/>
</dbReference>
<dbReference type="Antibodypedia" id="27325">
    <property type="antibodies" value="287 antibodies from 22 providers"/>
</dbReference>
<dbReference type="DNASU" id="54626"/>
<dbReference type="Ensembl" id="ENST00000377834.8">
    <molecule id="Q9Y543-1"/>
    <property type="protein sequence ID" value="ENSP00000367065.4"/>
    <property type="gene ID" value="ENSG00000069812.11"/>
</dbReference>
<dbReference type="Ensembl" id="ENST00000377836.8">
    <molecule id="Q9Y543-2"/>
    <property type="protein sequence ID" value="ENSP00000367067.4"/>
    <property type="gene ID" value="ENSG00000069812.11"/>
</dbReference>
<dbReference type="Ensembl" id="ENST00000377837.5">
    <molecule id="Q9Y543-2"/>
    <property type="protein sequence ID" value="ENSP00000367068.1"/>
    <property type="gene ID" value="ENSG00000069812.11"/>
</dbReference>
<dbReference type="GeneID" id="54626"/>
<dbReference type="KEGG" id="hsa:54626"/>
<dbReference type="MANE-Select" id="ENST00000377834.8">
    <property type="protein sequence ID" value="ENSP00000367065.4"/>
    <property type="RefSeq nucleotide sequence ID" value="NM_019089.5"/>
    <property type="RefSeq protein sequence ID" value="NP_061962.2"/>
</dbReference>
<dbReference type="UCSC" id="uc001amw.5">
    <molecule id="Q9Y543-1"/>
    <property type="organism name" value="human"/>
</dbReference>
<dbReference type="AGR" id="HGNC:16005"/>
<dbReference type="CTD" id="54626"/>
<dbReference type="DisGeNET" id="54626"/>
<dbReference type="GeneCards" id="HES2"/>
<dbReference type="HGNC" id="HGNC:16005">
    <property type="gene designation" value="HES2"/>
</dbReference>
<dbReference type="HPA" id="ENSG00000069812">
    <property type="expression patterns" value="Tissue enhanced (esophagus, skin, vagina)"/>
</dbReference>
<dbReference type="MIM" id="609970">
    <property type="type" value="gene"/>
</dbReference>
<dbReference type="neXtProt" id="NX_Q9Y543"/>
<dbReference type="OpenTargets" id="ENSG00000069812"/>
<dbReference type="PharmGKB" id="PA134958805"/>
<dbReference type="VEuPathDB" id="HostDB:ENSG00000069812"/>
<dbReference type="eggNOG" id="KOG4304">
    <property type="taxonomic scope" value="Eukaryota"/>
</dbReference>
<dbReference type="GeneTree" id="ENSGT00940000161602"/>
<dbReference type="HOGENOM" id="CLU_187816_0_0_1"/>
<dbReference type="InParanoid" id="Q9Y543"/>
<dbReference type="OMA" id="NSTGPMW"/>
<dbReference type="OrthoDB" id="6085656at2759"/>
<dbReference type="PAN-GO" id="Q9Y543">
    <property type="GO annotations" value="6 GO annotations based on evolutionary models"/>
</dbReference>
<dbReference type="PhylomeDB" id="Q9Y543"/>
<dbReference type="TreeFam" id="TF351373"/>
<dbReference type="PathwayCommons" id="Q9Y543"/>
<dbReference type="SignaLink" id="Q9Y543"/>
<dbReference type="BioGRID-ORCS" id="54626">
    <property type="hits" value="9 hits in 1162 CRISPR screens"/>
</dbReference>
<dbReference type="ChiTaRS" id="HES2">
    <property type="organism name" value="human"/>
</dbReference>
<dbReference type="GenomeRNAi" id="54626"/>
<dbReference type="Pharos" id="Q9Y543">
    <property type="development level" value="Tdark"/>
</dbReference>
<dbReference type="PRO" id="PR:Q9Y543"/>
<dbReference type="Proteomes" id="UP000005640">
    <property type="component" value="Chromosome 1"/>
</dbReference>
<dbReference type="RNAct" id="Q9Y543">
    <property type="molecule type" value="protein"/>
</dbReference>
<dbReference type="Bgee" id="ENSG00000069812">
    <property type="expression patterns" value="Expressed in esophagus mucosa and 102 other cell types or tissues"/>
</dbReference>
<dbReference type="ExpressionAtlas" id="Q9Y543">
    <property type="expression patterns" value="baseline and differential"/>
</dbReference>
<dbReference type="GO" id="GO:0000785">
    <property type="term" value="C:chromatin"/>
    <property type="evidence" value="ECO:0000247"/>
    <property type="project" value="NTNU_SB"/>
</dbReference>
<dbReference type="GO" id="GO:0005634">
    <property type="term" value="C:nucleus"/>
    <property type="evidence" value="ECO:0000318"/>
    <property type="project" value="GO_Central"/>
</dbReference>
<dbReference type="GO" id="GO:0000981">
    <property type="term" value="F:DNA-binding transcription factor activity, RNA polymerase II-specific"/>
    <property type="evidence" value="ECO:0000247"/>
    <property type="project" value="NTNU_SB"/>
</dbReference>
<dbReference type="GO" id="GO:0001227">
    <property type="term" value="F:DNA-binding transcription repressor activity, RNA polymerase II-specific"/>
    <property type="evidence" value="ECO:0007669"/>
    <property type="project" value="Ensembl"/>
</dbReference>
<dbReference type="GO" id="GO:0046983">
    <property type="term" value="F:protein dimerization activity"/>
    <property type="evidence" value="ECO:0007669"/>
    <property type="project" value="InterPro"/>
</dbReference>
<dbReference type="GO" id="GO:0000978">
    <property type="term" value="F:RNA polymerase II cis-regulatory region sequence-specific DNA binding"/>
    <property type="evidence" value="ECO:0000318"/>
    <property type="project" value="GO_Central"/>
</dbReference>
<dbReference type="GO" id="GO:1990837">
    <property type="term" value="F:sequence-specific double-stranded DNA binding"/>
    <property type="evidence" value="ECO:0000314"/>
    <property type="project" value="ARUK-UCL"/>
</dbReference>
<dbReference type="GO" id="GO:0050767">
    <property type="term" value="P:regulation of neurogenesis"/>
    <property type="evidence" value="ECO:0000318"/>
    <property type="project" value="GO_Central"/>
</dbReference>
<dbReference type="CDD" id="cd11463">
    <property type="entry name" value="bHLH-O_HES2"/>
    <property type="match status" value="1"/>
</dbReference>
<dbReference type="FunFam" id="4.10.280.10:FF:000009">
    <property type="entry name" value="Transcription factor HES-1"/>
    <property type="match status" value="1"/>
</dbReference>
<dbReference type="Gene3D" id="4.10.280.10">
    <property type="entry name" value="Helix-loop-helix DNA-binding domain"/>
    <property type="match status" value="1"/>
</dbReference>
<dbReference type="InterPro" id="IPR011598">
    <property type="entry name" value="bHLH_dom"/>
</dbReference>
<dbReference type="InterPro" id="IPR050370">
    <property type="entry name" value="HES_HEY"/>
</dbReference>
<dbReference type="InterPro" id="IPR036638">
    <property type="entry name" value="HLH_DNA-bd_sf"/>
</dbReference>
<dbReference type="InterPro" id="IPR003650">
    <property type="entry name" value="Orange_dom"/>
</dbReference>
<dbReference type="PANTHER" id="PTHR10985">
    <property type="entry name" value="BASIC HELIX-LOOP-HELIX TRANSCRIPTION FACTOR, HES-RELATED"/>
    <property type="match status" value="1"/>
</dbReference>
<dbReference type="Pfam" id="PF07527">
    <property type="entry name" value="Hairy_orange"/>
    <property type="match status" value="1"/>
</dbReference>
<dbReference type="Pfam" id="PF00010">
    <property type="entry name" value="HLH"/>
    <property type="match status" value="1"/>
</dbReference>
<dbReference type="SMART" id="SM00353">
    <property type="entry name" value="HLH"/>
    <property type="match status" value="1"/>
</dbReference>
<dbReference type="SMART" id="SM00511">
    <property type="entry name" value="ORANGE"/>
    <property type="match status" value="1"/>
</dbReference>
<dbReference type="SUPFAM" id="SSF47459">
    <property type="entry name" value="HLH, helix-loop-helix DNA-binding domain"/>
    <property type="match status" value="1"/>
</dbReference>
<dbReference type="SUPFAM" id="SSF158457">
    <property type="entry name" value="Orange domain-like"/>
    <property type="match status" value="1"/>
</dbReference>
<dbReference type="PROSITE" id="PS50888">
    <property type="entry name" value="BHLH"/>
    <property type="match status" value="1"/>
</dbReference>
<dbReference type="PROSITE" id="PS51054">
    <property type="entry name" value="ORANGE"/>
    <property type="match status" value="1"/>
</dbReference>
<accession>Q9Y543</accession>
<accession>A2RTZ9</accession>
<accession>Q96EN4</accession>
<accession>Q9Y542</accession>
<keyword id="KW-0025">Alternative splicing</keyword>
<keyword id="KW-0238">DNA-binding</keyword>
<keyword id="KW-0539">Nucleus</keyword>
<keyword id="KW-1185">Reference proteome</keyword>
<keyword id="KW-0678">Repressor</keyword>
<keyword id="KW-0804">Transcription</keyword>
<keyword id="KW-0805">Transcription regulation</keyword>